<reference key="1">
    <citation type="journal article" date="2005" name="Science">
        <title>The transcriptional landscape of the mammalian genome.</title>
        <authorList>
            <person name="Carninci P."/>
            <person name="Kasukawa T."/>
            <person name="Katayama S."/>
            <person name="Gough J."/>
            <person name="Frith M.C."/>
            <person name="Maeda N."/>
            <person name="Oyama R."/>
            <person name="Ravasi T."/>
            <person name="Lenhard B."/>
            <person name="Wells C."/>
            <person name="Kodzius R."/>
            <person name="Shimokawa K."/>
            <person name="Bajic V.B."/>
            <person name="Brenner S.E."/>
            <person name="Batalov S."/>
            <person name="Forrest A.R."/>
            <person name="Zavolan M."/>
            <person name="Davis M.J."/>
            <person name="Wilming L.G."/>
            <person name="Aidinis V."/>
            <person name="Allen J.E."/>
            <person name="Ambesi-Impiombato A."/>
            <person name="Apweiler R."/>
            <person name="Aturaliya R.N."/>
            <person name="Bailey T.L."/>
            <person name="Bansal M."/>
            <person name="Baxter L."/>
            <person name="Beisel K.W."/>
            <person name="Bersano T."/>
            <person name="Bono H."/>
            <person name="Chalk A.M."/>
            <person name="Chiu K.P."/>
            <person name="Choudhary V."/>
            <person name="Christoffels A."/>
            <person name="Clutterbuck D.R."/>
            <person name="Crowe M.L."/>
            <person name="Dalla E."/>
            <person name="Dalrymple B.P."/>
            <person name="de Bono B."/>
            <person name="Della Gatta G."/>
            <person name="di Bernardo D."/>
            <person name="Down T."/>
            <person name="Engstrom P."/>
            <person name="Fagiolini M."/>
            <person name="Faulkner G."/>
            <person name="Fletcher C.F."/>
            <person name="Fukushima T."/>
            <person name="Furuno M."/>
            <person name="Futaki S."/>
            <person name="Gariboldi M."/>
            <person name="Georgii-Hemming P."/>
            <person name="Gingeras T.R."/>
            <person name="Gojobori T."/>
            <person name="Green R.E."/>
            <person name="Gustincich S."/>
            <person name="Harbers M."/>
            <person name="Hayashi Y."/>
            <person name="Hensch T.K."/>
            <person name="Hirokawa N."/>
            <person name="Hill D."/>
            <person name="Huminiecki L."/>
            <person name="Iacono M."/>
            <person name="Ikeo K."/>
            <person name="Iwama A."/>
            <person name="Ishikawa T."/>
            <person name="Jakt M."/>
            <person name="Kanapin A."/>
            <person name="Katoh M."/>
            <person name="Kawasawa Y."/>
            <person name="Kelso J."/>
            <person name="Kitamura H."/>
            <person name="Kitano H."/>
            <person name="Kollias G."/>
            <person name="Krishnan S.P."/>
            <person name="Kruger A."/>
            <person name="Kummerfeld S.K."/>
            <person name="Kurochkin I.V."/>
            <person name="Lareau L.F."/>
            <person name="Lazarevic D."/>
            <person name="Lipovich L."/>
            <person name="Liu J."/>
            <person name="Liuni S."/>
            <person name="McWilliam S."/>
            <person name="Madan Babu M."/>
            <person name="Madera M."/>
            <person name="Marchionni L."/>
            <person name="Matsuda H."/>
            <person name="Matsuzawa S."/>
            <person name="Miki H."/>
            <person name="Mignone F."/>
            <person name="Miyake S."/>
            <person name="Morris K."/>
            <person name="Mottagui-Tabar S."/>
            <person name="Mulder N."/>
            <person name="Nakano N."/>
            <person name="Nakauchi H."/>
            <person name="Ng P."/>
            <person name="Nilsson R."/>
            <person name="Nishiguchi S."/>
            <person name="Nishikawa S."/>
            <person name="Nori F."/>
            <person name="Ohara O."/>
            <person name="Okazaki Y."/>
            <person name="Orlando V."/>
            <person name="Pang K.C."/>
            <person name="Pavan W.J."/>
            <person name="Pavesi G."/>
            <person name="Pesole G."/>
            <person name="Petrovsky N."/>
            <person name="Piazza S."/>
            <person name="Reed J."/>
            <person name="Reid J.F."/>
            <person name="Ring B.Z."/>
            <person name="Ringwald M."/>
            <person name="Rost B."/>
            <person name="Ruan Y."/>
            <person name="Salzberg S.L."/>
            <person name="Sandelin A."/>
            <person name="Schneider C."/>
            <person name="Schoenbach C."/>
            <person name="Sekiguchi K."/>
            <person name="Semple C.A."/>
            <person name="Seno S."/>
            <person name="Sessa L."/>
            <person name="Sheng Y."/>
            <person name="Shibata Y."/>
            <person name="Shimada H."/>
            <person name="Shimada K."/>
            <person name="Silva D."/>
            <person name="Sinclair B."/>
            <person name="Sperling S."/>
            <person name="Stupka E."/>
            <person name="Sugiura K."/>
            <person name="Sultana R."/>
            <person name="Takenaka Y."/>
            <person name="Taki K."/>
            <person name="Tammoja K."/>
            <person name="Tan S.L."/>
            <person name="Tang S."/>
            <person name="Taylor M.S."/>
            <person name="Tegner J."/>
            <person name="Teichmann S.A."/>
            <person name="Ueda H.R."/>
            <person name="van Nimwegen E."/>
            <person name="Verardo R."/>
            <person name="Wei C.L."/>
            <person name="Yagi K."/>
            <person name="Yamanishi H."/>
            <person name="Zabarovsky E."/>
            <person name="Zhu S."/>
            <person name="Zimmer A."/>
            <person name="Hide W."/>
            <person name="Bult C."/>
            <person name="Grimmond S.M."/>
            <person name="Teasdale R.D."/>
            <person name="Liu E.T."/>
            <person name="Brusic V."/>
            <person name="Quackenbush J."/>
            <person name="Wahlestedt C."/>
            <person name="Mattick J.S."/>
            <person name="Hume D.A."/>
            <person name="Kai C."/>
            <person name="Sasaki D."/>
            <person name="Tomaru Y."/>
            <person name="Fukuda S."/>
            <person name="Kanamori-Katayama M."/>
            <person name="Suzuki M."/>
            <person name="Aoki J."/>
            <person name="Arakawa T."/>
            <person name="Iida J."/>
            <person name="Imamura K."/>
            <person name="Itoh M."/>
            <person name="Kato T."/>
            <person name="Kawaji H."/>
            <person name="Kawagashira N."/>
            <person name="Kawashima T."/>
            <person name="Kojima M."/>
            <person name="Kondo S."/>
            <person name="Konno H."/>
            <person name="Nakano K."/>
            <person name="Ninomiya N."/>
            <person name="Nishio T."/>
            <person name="Okada M."/>
            <person name="Plessy C."/>
            <person name="Shibata K."/>
            <person name="Shiraki T."/>
            <person name="Suzuki S."/>
            <person name="Tagami M."/>
            <person name="Waki K."/>
            <person name="Watahiki A."/>
            <person name="Okamura-Oho Y."/>
            <person name="Suzuki H."/>
            <person name="Kawai J."/>
            <person name="Hayashizaki Y."/>
        </authorList>
    </citation>
    <scope>NUCLEOTIDE SEQUENCE [LARGE SCALE MRNA] (ISOFORMS 1 AND 2)</scope>
    <source>
        <strain>C57BL/6J</strain>
        <tissue>Head</tissue>
        <tissue>Thymus</tissue>
    </source>
</reference>
<reference key="2">
    <citation type="journal article" date="2009" name="PLoS Biol.">
        <title>Lineage-specific biology revealed by a finished genome assembly of the mouse.</title>
        <authorList>
            <person name="Church D.M."/>
            <person name="Goodstadt L."/>
            <person name="Hillier L.W."/>
            <person name="Zody M.C."/>
            <person name="Goldstein S."/>
            <person name="She X."/>
            <person name="Bult C.J."/>
            <person name="Agarwala R."/>
            <person name="Cherry J.L."/>
            <person name="DiCuccio M."/>
            <person name="Hlavina W."/>
            <person name="Kapustin Y."/>
            <person name="Meric P."/>
            <person name="Maglott D."/>
            <person name="Birtle Z."/>
            <person name="Marques A.C."/>
            <person name="Graves T."/>
            <person name="Zhou S."/>
            <person name="Teague B."/>
            <person name="Potamousis K."/>
            <person name="Churas C."/>
            <person name="Place M."/>
            <person name="Herschleb J."/>
            <person name="Runnheim R."/>
            <person name="Forrest D."/>
            <person name="Amos-Landgraf J."/>
            <person name="Schwartz D.C."/>
            <person name="Cheng Z."/>
            <person name="Lindblad-Toh K."/>
            <person name="Eichler E.E."/>
            <person name="Ponting C.P."/>
        </authorList>
    </citation>
    <scope>NUCLEOTIDE SEQUENCE [LARGE SCALE GENOMIC DNA]</scope>
    <source>
        <strain>C57BL/6J</strain>
    </source>
</reference>
<reference key="3">
    <citation type="journal article" date="2004" name="Genome Res.">
        <title>The status, quality, and expansion of the NIH full-length cDNA project: the Mammalian Gene Collection (MGC).</title>
        <authorList>
            <consortium name="The MGC Project Team"/>
        </authorList>
    </citation>
    <scope>NUCLEOTIDE SEQUENCE [LARGE SCALE MRNA] (ISOFORM 1)</scope>
    <source>
        <strain>C57BL/6J</strain>
        <tissue>Brain</tissue>
    </source>
</reference>
<reference key="4">
    <citation type="journal article" date="2008" name="J. Proteome Res.">
        <title>Large-scale identification and evolution indexing of tyrosine phosphorylation sites from murine brain.</title>
        <authorList>
            <person name="Ballif B.A."/>
            <person name="Carey G.R."/>
            <person name="Sunyaev S.R."/>
            <person name="Gygi S.P."/>
        </authorList>
    </citation>
    <scope>IDENTIFICATION BY MASS SPECTROMETRY [LARGE SCALE ANALYSIS]</scope>
    <source>
        <tissue>Brain</tissue>
    </source>
</reference>
<reference key="5">
    <citation type="journal article" date="2010" name="Cell">
        <title>A tissue-specific atlas of mouse protein phosphorylation and expression.</title>
        <authorList>
            <person name="Huttlin E.L."/>
            <person name="Jedrychowski M.P."/>
            <person name="Elias J.E."/>
            <person name="Goswami T."/>
            <person name="Rad R."/>
            <person name="Beausoleil S.A."/>
            <person name="Villen J."/>
            <person name="Haas W."/>
            <person name="Sowa M.E."/>
            <person name="Gygi S.P."/>
        </authorList>
    </citation>
    <scope>IDENTIFICATION BY MASS SPECTROMETRY [LARGE SCALE ANALYSIS]</scope>
    <source>
        <tissue>Brain</tissue>
    </source>
</reference>
<reference key="6">
    <citation type="journal article" date="2015" name="J. Cell Biol.">
        <title>Sac2/INPP5F is an inositol 4-phosphatase that functions in the endocytic pathway.</title>
        <authorList>
            <person name="Nakatsu F."/>
            <person name="Messa M."/>
            <person name="Nandez R."/>
            <person name="Czapla H."/>
            <person name="Zou Y."/>
            <person name="Strittmatter S.M."/>
            <person name="De Camilli P."/>
        </authorList>
    </citation>
    <scope>INTERACTION WITH INPP5F AND RAB5A</scope>
</reference>
<name>OCRL_MOUSE</name>
<gene>
    <name evidence="9" type="primary">Ocrl</name>
    <name evidence="9" type="synonym">Ocrl1</name>
</gene>
<keyword id="KW-0025">Alternative splicing</keyword>
<keyword id="KW-0966">Cell projection</keyword>
<keyword id="KW-0969">Cilium</keyword>
<keyword id="KW-0970">Cilium biogenesis/degradation</keyword>
<keyword id="KW-0168">Coated pit</keyword>
<keyword id="KW-0968">Cytoplasmic vesicle</keyword>
<keyword id="KW-0967">Endosome</keyword>
<keyword id="KW-0333">Golgi apparatus</keyword>
<keyword id="KW-0378">Hydrolase</keyword>
<keyword id="KW-0443">Lipid metabolism</keyword>
<keyword id="KW-0472">Membrane</keyword>
<keyword id="KW-1185">Reference proteome</keyword>
<accession>Q6NVF0</accession>
<accession>Q8BXC9</accession>
<protein>
    <recommendedName>
        <fullName>Inositol polyphosphate 5-phosphatase OCRL</fullName>
        <ecNumber evidence="3">3.1.3.36</ecNumber>
        <ecNumber evidence="3">3.1.3.56</ecNumber>
    </recommendedName>
    <alternativeName>
        <fullName>Inositol polyphosphate 5-phosphatase OCRL-1</fullName>
    </alternativeName>
    <alternativeName>
        <fullName>Phosphatidylinositol 3,4,5-triphosphate 5-phosphatase</fullName>
        <ecNumber evidence="3">3.1.3.86</ecNumber>
    </alternativeName>
</protein>
<organism>
    <name type="scientific">Mus musculus</name>
    <name type="common">Mouse</name>
    <dbReference type="NCBI Taxonomy" id="10090"/>
    <lineage>
        <taxon>Eukaryota</taxon>
        <taxon>Metazoa</taxon>
        <taxon>Chordata</taxon>
        <taxon>Craniata</taxon>
        <taxon>Vertebrata</taxon>
        <taxon>Euteleostomi</taxon>
        <taxon>Mammalia</taxon>
        <taxon>Eutheria</taxon>
        <taxon>Euarchontoglires</taxon>
        <taxon>Glires</taxon>
        <taxon>Rodentia</taxon>
        <taxon>Myomorpha</taxon>
        <taxon>Muroidea</taxon>
        <taxon>Muridae</taxon>
        <taxon>Murinae</taxon>
        <taxon>Mus</taxon>
        <taxon>Mus</taxon>
    </lineage>
</organism>
<comment type="function">
    <text evidence="3">Catalyzes the hydrolysis of the 5-position phosphate of phosphatidylinositol 4,5-bisphosphate (PtdIns(4,5)P2) and phosphatidylinositol-3,4,5-bisphosphate (PtdIns(3,4,5)P3), with the greatest catalytic activity towards PtdIns(4,5)P2. Able also to hydrolyze the 5-phosphate of inositol 1,4,5-trisphosphate and of inositol 1,3,4,5-tetrakisphosphate. Regulates traffic in the endosomal pathway by regulating the specific pool of phosphatidylinositol 4,5-bisphosphate that is associated with endosomes. Involved in primary cilia assembly. Acts as a regulator of phagocytosis, hydrolyzing PtdIns(4,5)P2 to promote phagosome closure, through attenuation of PI3K signaling.</text>
</comment>
<comment type="catalytic activity">
    <reaction evidence="3">
        <text>a 1,2-diacyl-sn-glycero-3-phospho-(1D-myo-inositol-4,5-bisphosphate) + H2O = a 1,2-diacyl-sn-glycero-3-phospho-(1D-myo-inositol 4-phosphate) + phosphate</text>
        <dbReference type="Rhea" id="RHEA:22764"/>
        <dbReference type="ChEBI" id="CHEBI:15377"/>
        <dbReference type="ChEBI" id="CHEBI:43474"/>
        <dbReference type="ChEBI" id="CHEBI:58178"/>
        <dbReference type="ChEBI" id="CHEBI:58456"/>
        <dbReference type="EC" id="3.1.3.36"/>
    </reaction>
    <physiologicalReaction direction="left-to-right" evidence="3">
        <dbReference type="Rhea" id="RHEA:22765"/>
    </physiologicalReaction>
</comment>
<comment type="catalytic activity">
    <reaction evidence="3">
        <text>a 1,2-diacyl-sn-glycero-3-phospho-(1D-myo-inositol-3,4,5-trisphosphate) + H2O = a 1,2-diacyl-sn-glycero-3-phospho-(1D-myo-inositol-3,4-bisphosphate) + phosphate</text>
        <dbReference type="Rhea" id="RHEA:25528"/>
        <dbReference type="ChEBI" id="CHEBI:15377"/>
        <dbReference type="ChEBI" id="CHEBI:43474"/>
        <dbReference type="ChEBI" id="CHEBI:57658"/>
        <dbReference type="ChEBI" id="CHEBI:57836"/>
        <dbReference type="EC" id="3.1.3.86"/>
    </reaction>
    <physiologicalReaction direction="left-to-right" evidence="3">
        <dbReference type="Rhea" id="RHEA:25529"/>
    </physiologicalReaction>
</comment>
<comment type="catalytic activity">
    <reaction evidence="3">
        <text>1D-myo-inositol 1,3,4,5-tetrakisphosphate + H2O = 1D-myo-inositol 1,3,4-trisphosphate + phosphate</text>
        <dbReference type="Rhea" id="RHEA:11392"/>
        <dbReference type="ChEBI" id="CHEBI:15377"/>
        <dbReference type="ChEBI" id="CHEBI:43474"/>
        <dbReference type="ChEBI" id="CHEBI:57895"/>
        <dbReference type="ChEBI" id="CHEBI:58414"/>
        <dbReference type="EC" id="3.1.3.56"/>
    </reaction>
    <physiologicalReaction direction="left-to-right" evidence="3">
        <dbReference type="Rhea" id="RHEA:11393"/>
    </physiologicalReaction>
</comment>
<comment type="catalytic activity">
    <reaction evidence="3">
        <text>1D-myo-inositol 1,4,5-trisphosphate + H2O = 1D-myo-inositol 1,4-bisphosphate + phosphate</text>
        <dbReference type="Rhea" id="RHEA:19797"/>
        <dbReference type="ChEBI" id="CHEBI:15377"/>
        <dbReference type="ChEBI" id="CHEBI:43474"/>
        <dbReference type="ChEBI" id="CHEBI:58282"/>
        <dbReference type="ChEBI" id="CHEBI:203600"/>
        <dbReference type="EC" id="3.1.3.56"/>
    </reaction>
    <physiologicalReaction direction="left-to-right" evidence="3">
        <dbReference type="Rhea" id="RHEA:19798"/>
    </physiologicalReaction>
</comment>
<comment type="subunit">
    <text evidence="3 6">Interacts with APPL1, PHETA1/SES1 and PHETA2/SES2; APPL1-binding and PHETA1-binding are mutually exclusive (By similarity). Interacts with clathrin heavy chain. Interacts with several Rab GTPases (in their GTP-bound forms), at least RAB1B, RAB5A, RAB6A, RAB8A, RAB31 and RAB35; these interactions may play a dual role in targeting OCRL to the specific membranes and stimulating the phosphatase activitye (PubMed:25869668). Interaction with RAB8A modulates OCRL recruitment to cilia. Interacts with RAB31 (By similarity). Interacts with INPP5F (PubMed:25869668).</text>
</comment>
<comment type="subcellular location">
    <subcellularLocation>
        <location evidence="2">Cytoplasmic vesicle</location>
        <location evidence="2">Phagosome membrane</location>
    </subcellularLocation>
    <subcellularLocation>
        <location evidence="3">Early endosome membrane</location>
    </subcellularLocation>
    <subcellularLocation>
        <location evidence="3">Membrane</location>
        <location evidence="3">Clathrin-coated pit</location>
    </subcellularLocation>
    <subcellularLocation>
        <location evidence="3">Cell projection</location>
        <location evidence="3">Cilium</location>
        <location evidence="3">Photoreceptor outer segment</location>
    </subcellularLocation>
    <subcellularLocation>
        <location evidence="3">Cell projection</location>
        <location evidence="3">Cilium</location>
    </subcellularLocation>
    <subcellularLocation>
        <location evidence="2">Cytoplasmic vesicle</location>
    </subcellularLocation>
    <subcellularLocation>
        <location evidence="3">Endosome</location>
    </subcellularLocation>
    <subcellularLocation>
        <location evidence="2">Golgi apparatus</location>
        <location evidence="2">trans-Golgi network</location>
    </subcellularLocation>
    <text evidence="3">Also found on macropinosomes.</text>
</comment>
<comment type="alternative products">
    <event type="alternative splicing"/>
    <isoform>
        <id>Q6NVF0-1</id>
        <name>1</name>
        <sequence type="displayed"/>
    </isoform>
    <isoform>
        <id>Q6NVF0-2</id>
        <name>2</name>
        <sequence type="described" ref="VSP_045749 VSP_045750"/>
    </isoform>
</comment>
<comment type="domain">
    <text evidence="3">The ASH (ASPM-SPD2-Hydin) and RhoGAP (Rho GTPase activating) domains form a single folding module. The ASH domain has an immunoglobulin-like fold, the Rho-GAP domain lacks the catalytic arginine and is catalytically inactive. The ASH-RhoGAP module regulates the majority of the protein-protein interactions currently described. The ASH domain mediates association with membrane-targeting Rab GTPases. The Rho-GAP domain interacts with the endocytic adapter APPL1, which is then displaced by PHETA1 and PHETA2 as endosomes mature (By similarity).</text>
</comment>
<comment type="similarity">
    <text evidence="8">Belongs to the inositol 1,4,5-trisphosphate 5-phosphatase type II family.</text>
</comment>
<feature type="chain" id="PRO_0000421564" description="Inositol polyphosphate 5-phosphatase OCRL">
    <location>
        <begin position="1"/>
        <end position="900"/>
    </location>
</feature>
<feature type="domain" description="PH">
    <location>
        <begin position="1"/>
        <end position="119"/>
    </location>
</feature>
<feature type="domain" description="Rho-GAP" evidence="4">
    <location>
        <begin position="720"/>
        <end position="900"/>
    </location>
</feature>
<feature type="region of interest" description="Disordered" evidence="5">
    <location>
        <begin position="160"/>
        <end position="201"/>
    </location>
</feature>
<feature type="region of interest" description="5-phosphatase" evidence="1">
    <location>
        <begin position="236"/>
        <end position="562"/>
    </location>
</feature>
<feature type="region of interest" description="ASH" evidence="1">
    <location>
        <begin position="563"/>
        <end position="677"/>
    </location>
</feature>
<feature type="short sequence motif" description="Clathrin box 1">
    <location>
        <begin position="73"/>
        <end position="77"/>
    </location>
</feature>
<feature type="short sequence motif" description="Clathrin box 2">
    <location>
        <begin position="701"/>
        <end position="705"/>
    </location>
</feature>
<feature type="compositionally biased region" description="Basic and acidic residues" evidence="5">
    <location>
        <begin position="187"/>
        <end position="199"/>
    </location>
</feature>
<feature type="site" description="Arginine finger; crucial for GTP hydrolysis by stabilizing the transition state" evidence="4">
    <location>
        <position position="756"/>
    </location>
</feature>
<feature type="splice variant" id="VSP_045749" description="In isoform 2." evidence="7">
    <original>EKSLLQMVPLDEGTSERPLQVPKEIWLLV</original>
    <variation>VIQSIGGNEGFLVLD</variation>
    <location>
        <begin position="713"/>
        <end position="741"/>
    </location>
</feature>
<feature type="splice variant" id="VSP_045750" description="In isoform 2." evidence="7">
    <location>
        <begin position="742"/>
        <end position="900"/>
    </location>
</feature>
<proteinExistence type="evidence at protein level"/>
<sequence length="900" mass="104285">MEPRLPIGAQPLAMVAGLEMKGPLREPCVLTLARRNGQYELIIQLHGKEQHVQDIIPINSHFRCVQEAEETLLIDIASNSGCKIRVQGDWTRERHFEIPDEERCLKFLSEVLEAQEAQSQLLVPEQKDSSSWYQKLDTMDKPAYSGLLGFEDNFSSLDLDKKMNTQNPRSGSHREPPPPPSSSTRMLSREKEASNKEQPKVTNTMRKLFVPNTQTGQREGLIKHILTKREKEYVNIQSFRFFVGTWNVNGQSPDSSLEPWLDCDPNPPDIYCIGFQELDLSTEAFFYFESVKEQEWSLAVERGLPSKAKYRKVQLVRLVGMMLLIFARKDQCQYIRDVATETTGTGIMGKMGNKGGVAVRFVFHNTTFCIVNSHLAAHVEEFERRNQDYKDICARMTFSVPNQTVPQVNIMKHDVVIWLGDLNYRLCMPDASEVKSLINKNELHKLLKFDQLNIQRTQKKAFADFNEGEINFVPTYKYDSKTDRWDSSGKCRVPAWCDRILWRGINVNQLHYRSHMELKTSDHKPVSALFHIGVKVVDERRYRKVFEDIVRIMDRMENDFLPSLELSRREFFFENVKFRQLQKEKFQISNNGQVPCHFSFIPKLNDSQYCKPWLRAEPFEGYLEPNETLDISLDVYVSKDSVTILNSGEDKIEDILVLHLDRGKDYFLTIGGNYLPSCFGTSLEALCRMKRPIREVPVTKLIDLEEDSYLEKEKSLLQMVPLDEGTSERPLQVPKEIWLLVDHLFKYACHQEDLFQTPGMQEELQQIIDCLDTSIPETIPGNNHSVAEALLIFLEALPEPVICYELYQRCLDSAHDPRICKQVISQLPRCHRNVFRYLMAFLRELLKFSDYNNINTNMIATLFSSLLLRPPPNLMTRQTPNDRQHAIQFLLVFLLGNEED</sequence>
<evidence type="ECO:0000250" key="1"/>
<evidence type="ECO:0000250" key="2">
    <source>
        <dbReference type="UniProtKB" id="D3ZGS3"/>
    </source>
</evidence>
<evidence type="ECO:0000250" key="3">
    <source>
        <dbReference type="UniProtKB" id="Q01968"/>
    </source>
</evidence>
<evidence type="ECO:0000255" key="4">
    <source>
        <dbReference type="PROSITE-ProRule" id="PRU00172"/>
    </source>
</evidence>
<evidence type="ECO:0000256" key="5">
    <source>
        <dbReference type="SAM" id="MobiDB-lite"/>
    </source>
</evidence>
<evidence type="ECO:0000269" key="6">
    <source>
    </source>
</evidence>
<evidence type="ECO:0000303" key="7">
    <source>
    </source>
</evidence>
<evidence type="ECO:0000305" key="8"/>
<evidence type="ECO:0000312" key="9">
    <source>
        <dbReference type="MGI" id="MGI:109589"/>
    </source>
</evidence>
<dbReference type="EC" id="3.1.3.36" evidence="3"/>
<dbReference type="EC" id="3.1.3.56" evidence="3"/>
<dbReference type="EC" id="3.1.3.86" evidence="3"/>
<dbReference type="EMBL" id="AK047906">
    <property type="protein sequence ID" value="BAC33188.1"/>
    <property type="molecule type" value="mRNA"/>
</dbReference>
<dbReference type="EMBL" id="AK041963">
    <property type="protein sequence ID" value="BAE20614.1"/>
    <property type="molecule type" value="mRNA"/>
</dbReference>
<dbReference type="EMBL" id="AL714010">
    <property type="status" value="NOT_ANNOTATED_CDS"/>
    <property type="molecule type" value="Genomic_DNA"/>
</dbReference>
<dbReference type="EMBL" id="BC068146">
    <property type="protein sequence ID" value="AAH68146.1"/>
    <property type="molecule type" value="mRNA"/>
</dbReference>
<dbReference type="CCDS" id="CCDS40957.1">
    <molecule id="Q6NVF0-1"/>
</dbReference>
<dbReference type="RefSeq" id="NP_796189.2">
    <molecule id="Q6NVF0-1"/>
    <property type="nucleotide sequence ID" value="NM_177215.3"/>
</dbReference>
<dbReference type="SMR" id="Q6NVF0"/>
<dbReference type="BioGRID" id="236175">
    <property type="interactions" value="11"/>
</dbReference>
<dbReference type="CORUM" id="Q6NVF0"/>
<dbReference type="FunCoup" id="Q6NVF0">
    <property type="interactions" value="2706"/>
</dbReference>
<dbReference type="STRING" id="10090.ENSMUSP00000001202"/>
<dbReference type="GlyGen" id="Q6NVF0">
    <property type="glycosylation" value="1 site, 1 N-linked glycan (1 site)"/>
</dbReference>
<dbReference type="iPTMnet" id="Q6NVF0"/>
<dbReference type="PhosphoSitePlus" id="Q6NVF0"/>
<dbReference type="SwissPalm" id="Q6NVF0"/>
<dbReference type="PaxDb" id="10090-ENSMUSP00000001202"/>
<dbReference type="PeptideAtlas" id="Q6NVF0"/>
<dbReference type="ProteomicsDB" id="293827">
    <molecule id="Q6NVF0-1"/>
</dbReference>
<dbReference type="ProteomicsDB" id="293828">
    <molecule id="Q6NVF0-2"/>
</dbReference>
<dbReference type="Pumba" id="Q6NVF0"/>
<dbReference type="ABCD" id="Q6NVF0">
    <property type="antibodies" value="1 sequenced antibody"/>
</dbReference>
<dbReference type="Antibodypedia" id="509">
    <property type="antibodies" value="337 antibodies from 35 providers"/>
</dbReference>
<dbReference type="DNASU" id="320634"/>
<dbReference type="Ensembl" id="ENSMUST00000001202.15">
    <molecule id="Q6NVF0-1"/>
    <property type="protein sequence ID" value="ENSMUSP00000001202.9"/>
    <property type="gene ID" value="ENSMUSG00000001173.16"/>
</dbReference>
<dbReference type="Ensembl" id="ENSMUST00000115020.8">
    <molecule id="Q6NVF0-2"/>
    <property type="protein sequence ID" value="ENSMUSP00000110672.2"/>
    <property type="gene ID" value="ENSMUSG00000001173.16"/>
</dbReference>
<dbReference type="GeneID" id="320634"/>
<dbReference type="KEGG" id="mmu:320634"/>
<dbReference type="UCSC" id="uc009tbr.1">
    <molecule id="Q6NVF0-1"/>
    <property type="organism name" value="mouse"/>
</dbReference>
<dbReference type="UCSC" id="uc009tbs.1">
    <molecule id="Q6NVF0-2"/>
    <property type="organism name" value="mouse"/>
</dbReference>
<dbReference type="AGR" id="MGI:109589"/>
<dbReference type="CTD" id="4952"/>
<dbReference type="MGI" id="MGI:109589">
    <property type="gene designation" value="Ocrl"/>
</dbReference>
<dbReference type="VEuPathDB" id="HostDB:ENSMUSG00000001173"/>
<dbReference type="eggNOG" id="KOG0565">
    <property type="taxonomic scope" value="Eukaryota"/>
</dbReference>
<dbReference type="GeneTree" id="ENSGT00940000157996"/>
<dbReference type="HOGENOM" id="CLU_006779_3_1_1"/>
<dbReference type="InParanoid" id="Q6NVF0"/>
<dbReference type="OMA" id="WLGCSER"/>
<dbReference type="OrthoDB" id="7862313at2759"/>
<dbReference type="PhylomeDB" id="Q6NVF0"/>
<dbReference type="TreeFam" id="TF317034"/>
<dbReference type="Reactome" id="R-MMU-1660499">
    <property type="pathway name" value="Synthesis of PIPs at the plasma membrane"/>
</dbReference>
<dbReference type="Reactome" id="R-MMU-1660514">
    <property type="pathway name" value="Synthesis of PIPs at the Golgi membrane"/>
</dbReference>
<dbReference type="Reactome" id="R-MMU-1855183">
    <property type="pathway name" value="Synthesis of IP2, IP, and Ins in the cytosol"/>
</dbReference>
<dbReference type="Reactome" id="R-MMU-1855204">
    <property type="pathway name" value="Synthesis of IP3 and IP4 in the cytosol"/>
</dbReference>
<dbReference type="Reactome" id="R-MMU-432722">
    <property type="pathway name" value="Golgi Associated Vesicle Biogenesis"/>
</dbReference>
<dbReference type="Reactome" id="R-MMU-8856828">
    <property type="pathway name" value="Clathrin-mediated endocytosis"/>
</dbReference>
<dbReference type="Reactome" id="R-MMU-9013409">
    <property type="pathway name" value="RHOJ GTPase cycle"/>
</dbReference>
<dbReference type="Reactome" id="R-MMU-9013423">
    <property type="pathway name" value="RAC3 GTPase cycle"/>
</dbReference>
<dbReference type="BioGRID-ORCS" id="320634">
    <property type="hits" value="0 hits in 82 CRISPR screens"/>
</dbReference>
<dbReference type="ChiTaRS" id="Ocrl">
    <property type="organism name" value="mouse"/>
</dbReference>
<dbReference type="PRO" id="PR:Q6NVF0"/>
<dbReference type="Proteomes" id="UP000000589">
    <property type="component" value="Chromosome X"/>
</dbReference>
<dbReference type="RNAct" id="Q6NVF0">
    <property type="molecule type" value="protein"/>
</dbReference>
<dbReference type="Bgee" id="ENSMUSG00000001173">
    <property type="expression patterns" value="Expressed in otolith organ and 231 other cell types or tissues"/>
</dbReference>
<dbReference type="ExpressionAtlas" id="Q6NVF0">
    <property type="expression patterns" value="baseline and differential"/>
</dbReference>
<dbReference type="GO" id="GO:0034451">
    <property type="term" value="C:centriolar satellite"/>
    <property type="evidence" value="ECO:0007669"/>
    <property type="project" value="Ensembl"/>
</dbReference>
<dbReference type="GO" id="GO:0036064">
    <property type="term" value="C:ciliary basal body"/>
    <property type="evidence" value="ECO:0007669"/>
    <property type="project" value="Ensembl"/>
</dbReference>
<dbReference type="GO" id="GO:0005905">
    <property type="term" value="C:clathrin-coated pit"/>
    <property type="evidence" value="ECO:0007669"/>
    <property type="project" value="UniProtKB-SubCell"/>
</dbReference>
<dbReference type="GO" id="GO:0030136">
    <property type="term" value="C:clathrin-coated vesicle"/>
    <property type="evidence" value="ECO:0000250"/>
    <property type="project" value="UniProtKB"/>
</dbReference>
<dbReference type="GO" id="GO:0005829">
    <property type="term" value="C:cytosol"/>
    <property type="evidence" value="ECO:0007669"/>
    <property type="project" value="Ensembl"/>
</dbReference>
<dbReference type="GO" id="GO:0005769">
    <property type="term" value="C:early endosome"/>
    <property type="evidence" value="ECO:0000250"/>
    <property type="project" value="UniProtKB"/>
</dbReference>
<dbReference type="GO" id="GO:0031901">
    <property type="term" value="C:early endosome membrane"/>
    <property type="evidence" value="ECO:0007669"/>
    <property type="project" value="UniProtKB-SubCell"/>
</dbReference>
<dbReference type="GO" id="GO:0005794">
    <property type="term" value="C:Golgi apparatus"/>
    <property type="evidence" value="ECO:0000250"/>
    <property type="project" value="MGI"/>
</dbReference>
<dbReference type="GO" id="GO:0005634">
    <property type="term" value="C:nucleus"/>
    <property type="evidence" value="ECO:0007669"/>
    <property type="project" value="Ensembl"/>
</dbReference>
<dbReference type="GO" id="GO:0030670">
    <property type="term" value="C:phagocytic vesicle membrane"/>
    <property type="evidence" value="ECO:0007669"/>
    <property type="project" value="UniProtKB-SubCell"/>
</dbReference>
<dbReference type="GO" id="GO:0001750">
    <property type="term" value="C:photoreceptor outer segment"/>
    <property type="evidence" value="ECO:0007669"/>
    <property type="project" value="UniProtKB-SubCell"/>
</dbReference>
<dbReference type="GO" id="GO:0005886">
    <property type="term" value="C:plasma membrane"/>
    <property type="evidence" value="ECO:0007669"/>
    <property type="project" value="Ensembl"/>
</dbReference>
<dbReference type="GO" id="GO:0005802">
    <property type="term" value="C:trans-Golgi network"/>
    <property type="evidence" value="ECO:0007669"/>
    <property type="project" value="Ensembl"/>
</dbReference>
<dbReference type="GO" id="GO:0005096">
    <property type="term" value="F:GTPase activator activity"/>
    <property type="evidence" value="ECO:0007669"/>
    <property type="project" value="Ensembl"/>
</dbReference>
<dbReference type="GO" id="GO:0052745">
    <property type="term" value="F:inositol phosphate phosphatase activity"/>
    <property type="evidence" value="ECO:0000250"/>
    <property type="project" value="UniProtKB"/>
</dbReference>
<dbReference type="GO" id="GO:0052659">
    <property type="term" value="F:inositol-1,3,4,5-tetrakisphosphate 5-phosphatase activity"/>
    <property type="evidence" value="ECO:0007669"/>
    <property type="project" value="RHEA"/>
</dbReference>
<dbReference type="GO" id="GO:0052658">
    <property type="term" value="F:inositol-1,4,5-trisphosphate 5-phosphatase activity"/>
    <property type="evidence" value="ECO:0007669"/>
    <property type="project" value="RHEA"/>
</dbReference>
<dbReference type="GO" id="GO:0034485">
    <property type="term" value="F:phosphatidylinositol-3,4,5-trisphosphate 5-phosphatase activity"/>
    <property type="evidence" value="ECO:0007669"/>
    <property type="project" value="UniProtKB-EC"/>
</dbReference>
<dbReference type="GO" id="GO:0004439">
    <property type="term" value="F:phosphatidylinositol-4,5-bisphosphate 5-phosphatase activity"/>
    <property type="evidence" value="ECO:0000314"/>
    <property type="project" value="MGI"/>
</dbReference>
<dbReference type="GO" id="GO:0031267">
    <property type="term" value="F:small GTPase binding"/>
    <property type="evidence" value="ECO:0007669"/>
    <property type="project" value="Ensembl"/>
</dbReference>
<dbReference type="GO" id="GO:0060271">
    <property type="term" value="P:cilium assembly"/>
    <property type="evidence" value="ECO:0007669"/>
    <property type="project" value="Ensembl"/>
</dbReference>
<dbReference type="GO" id="GO:0001701">
    <property type="term" value="P:in utero embryonic development"/>
    <property type="evidence" value="ECO:0000316"/>
    <property type="project" value="MGI"/>
</dbReference>
<dbReference type="GO" id="GO:0046856">
    <property type="term" value="P:phosphatidylinositol dephosphorylation"/>
    <property type="evidence" value="ECO:0000314"/>
    <property type="project" value="MGI"/>
</dbReference>
<dbReference type="GO" id="GO:0007165">
    <property type="term" value="P:signal transduction"/>
    <property type="evidence" value="ECO:0007669"/>
    <property type="project" value="InterPro"/>
</dbReference>
<dbReference type="CDD" id="cd09093">
    <property type="entry name" value="INPP5c_INPP5B"/>
    <property type="match status" value="1"/>
</dbReference>
<dbReference type="CDD" id="cd13382">
    <property type="entry name" value="PH_OCRL1"/>
    <property type="match status" value="1"/>
</dbReference>
<dbReference type="CDD" id="cd04380">
    <property type="entry name" value="RhoGAP_OCRL1"/>
    <property type="match status" value="1"/>
</dbReference>
<dbReference type="FunFam" id="2.30.29.110:FF:000001">
    <property type="entry name" value="inositol polyphosphate 5-phosphatase OCRL-1"/>
    <property type="match status" value="1"/>
</dbReference>
<dbReference type="FunFam" id="2.60.40.10:FF:000132">
    <property type="entry name" value="Inositol polyphosphate 5-phosphatase OCRL-1 isoform b"/>
    <property type="match status" value="1"/>
</dbReference>
<dbReference type="FunFam" id="1.10.555.10:FF:000012">
    <property type="entry name" value="Putative inositol polyphosphate 5-phosphatase OCRL-1"/>
    <property type="match status" value="1"/>
</dbReference>
<dbReference type="FunFam" id="3.60.10.10:FF:000004">
    <property type="entry name" value="Type II inositol 1,4,5-trisphosphate 5-phosphatase"/>
    <property type="match status" value="1"/>
</dbReference>
<dbReference type="Gene3D" id="2.30.29.110">
    <property type="match status" value="1"/>
</dbReference>
<dbReference type="Gene3D" id="3.60.10.10">
    <property type="entry name" value="Endonuclease/exonuclease/phosphatase"/>
    <property type="match status" value="1"/>
</dbReference>
<dbReference type="Gene3D" id="2.60.40.10">
    <property type="entry name" value="Immunoglobulins"/>
    <property type="match status" value="1"/>
</dbReference>
<dbReference type="Gene3D" id="1.10.555.10">
    <property type="entry name" value="Rho GTPase activation protein"/>
    <property type="match status" value="1"/>
</dbReference>
<dbReference type="InterPro" id="IPR036691">
    <property type="entry name" value="Endo/exonu/phosph_ase_sf"/>
</dbReference>
<dbReference type="InterPro" id="IPR013783">
    <property type="entry name" value="Ig-like_fold"/>
</dbReference>
<dbReference type="InterPro" id="IPR046985">
    <property type="entry name" value="IP5"/>
</dbReference>
<dbReference type="InterPro" id="IPR000300">
    <property type="entry name" value="IPPc"/>
</dbReference>
<dbReference type="InterPro" id="IPR048869">
    <property type="entry name" value="OCRL-1_2_ASH"/>
</dbReference>
<dbReference type="InterPro" id="IPR037793">
    <property type="entry name" value="OCRL1/INPP5B_INPP5c"/>
</dbReference>
<dbReference type="InterPro" id="IPR037787">
    <property type="entry name" value="OCRL1_PH"/>
</dbReference>
<dbReference type="InterPro" id="IPR031995">
    <property type="entry name" value="OCRL_clath-bd"/>
</dbReference>
<dbReference type="InterPro" id="IPR008936">
    <property type="entry name" value="Rho_GTPase_activation_prot"/>
</dbReference>
<dbReference type="InterPro" id="IPR000198">
    <property type="entry name" value="RhoGAP_dom"/>
</dbReference>
<dbReference type="InterPro" id="IPR047078">
    <property type="entry name" value="RhoGAP_OCRL1"/>
</dbReference>
<dbReference type="PANTHER" id="PTHR11200">
    <property type="entry name" value="INOSITOL 5-PHOSPHATASE"/>
    <property type="match status" value="1"/>
</dbReference>
<dbReference type="PANTHER" id="PTHR11200:SF176">
    <property type="entry name" value="INOSITOL POLYPHOSPHATE 5-PHOSPHATASE OCRL"/>
    <property type="match status" value="1"/>
</dbReference>
<dbReference type="Pfam" id="PF22669">
    <property type="entry name" value="Exo_endo_phos2"/>
    <property type="match status" value="1"/>
</dbReference>
<dbReference type="Pfam" id="PF21310">
    <property type="entry name" value="OCRL-like_ASH"/>
    <property type="match status" value="1"/>
</dbReference>
<dbReference type="Pfam" id="PF16726">
    <property type="entry name" value="OCRL_clath_bd"/>
    <property type="match status" value="1"/>
</dbReference>
<dbReference type="Pfam" id="PF00620">
    <property type="entry name" value="RhoGAP"/>
    <property type="match status" value="1"/>
</dbReference>
<dbReference type="SMART" id="SM00128">
    <property type="entry name" value="IPPc"/>
    <property type="match status" value="1"/>
</dbReference>
<dbReference type="SMART" id="SM00324">
    <property type="entry name" value="RhoGAP"/>
    <property type="match status" value="1"/>
</dbReference>
<dbReference type="SUPFAM" id="SSF56219">
    <property type="entry name" value="DNase I-like"/>
    <property type="match status" value="1"/>
</dbReference>
<dbReference type="SUPFAM" id="SSF48350">
    <property type="entry name" value="GTPase activation domain, GAP"/>
    <property type="match status" value="1"/>
</dbReference>
<dbReference type="PROSITE" id="PS50238">
    <property type="entry name" value="RHOGAP"/>
    <property type="match status" value="1"/>
</dbReference>